<feature type="chain" id="PRO_0000078577" description="Chaperone protein DnaK">
    <location>
        <begin position="1"/>
        <end position="635"/>
    </location>
</feature>
<feature type="region of interest" description="Disordered" evidence="2">
    <location>
        <begin position="601"/>
        <end position="635"/>
    </location>
</feature>
<feature type="modified residue" description="Phosphothreonine; by autocatalysis" evidence="1">
    <location>
        <position position="197"/>
    </location>
</feature>
<gene>
    <name type="primary">dnaK</name>
    <name type="ordered locus">TP_0216</name>
</gene>
<protein>
    <recommendedName>
        <fullName>Chaperone protein DnaK</fullName>
    </recommendedName>
    <alternativeName>
        <fullName>HSP70</fullName>
    </alternativeName>
    <alternativeName>
        <fullName>Heat shock 70 kDa protein</fullName>
    </alternativeName>
    <alternativeName>
        <fullName>Heat shock protein 70</fullName>
    </alternativeName>
</protein>
<dbReference type="EMBL" id="AE000520">
    <property type="protein sequence ID" value="AAC65204.1"/>
    <property type="molecule type" value="Genomic_DNA"/>
</dbReference>
<dbReference type="PIR" id="F71352">
    <property type="entry name" value="F71352"/>
</dbReference>
<dbReference type="RefSeq" id="WP_010881664.1">
    <property type="nucleotide sequence ID" value="NC_021490.2"/>
</dbReference>
<dbReference type="SMR" id="O83246"/>
<dbReference type="IntAct" id="O83246">
    <property type="interactions" value="2"/>
</dbReference>
<dbReference type="STRING" id="243276.TP_0216"/>
<dbReference type="EnsemblBacteria" id="AAC65204">
    <property type="protein sequence ID" value="AAC65204"/>
    <property type="gene ID" value="TP_0216"/>
</dbReference>
<dbReference type="GeneID" id="93876004"/>
<dbReference type="KEGG" id="tpa:TP_0216"/>
<dbReference type="KEGG" id="tpw:TPANIC_0216"/>
<dbReference type="eggNOG" id="COG0443">
    <property type="taxonomic scope" value="Bacteria"/>
</dbReference>
<dbReference type="HOGENOM" id="CLU_005965_2_1_12"/>
<dbReference type="OrthoDB" id="9766019at2"/>
<dbReference type="Proteomes" id="UP000000811">
    <property type="component" value="Chromosome"/>
</dbReference>
<dbReference type="GO" id="GO:0005524">
    <property type="term" value="F:ATP binding"/>
    <property type="evidence" value="ECO:0007669"/>
    <property type="project" value="UniProtKB-UniRule"/>
</dbReference>
<dbReference type="GO" id="GO:0140662">
    <property type="term" value="F:ATP-dependent protein folding chaperone"/>
    <property type="evidence" value="ECO:0007669"/>
    <property type="project" value="InterPro"/>
</dbReference>
<dbReference type="GO" id="GO:0051082">
    <property type="term" value="F:unfolded protein binding"/>
    <property type="evidence" value="ECO:0007669"/>
    <property type="project" value="InterPro"/>
</dbReference>
<dbReference type="CDD" id="cd10234">
    <property type="entry name" value="ASKHA_NBD_HSP70_DnaK-like"/>
    <property type="match status" value="1"/>
</dbReference>
<dbReference type="FunFam" id="2.60.34.10:FF:000014">
    <property type="entry name" value="Chaperone protein DnaK HSP70"/>
    <property type="match status" value="1"/>
</dbReference>
<dbReference type="FunFam" id="3.30.420.40:FF:000020">
    <property type="entry name" value="Chaperone protein HscA homolog"/>
    <property type="match status" value="1"/>
</dbReference>
<dbReference type="FunFam" id="1.20.1270.10:FF:000001">
    <property type="entry name" value="Molecular chaperone DnaK"/>
    <property type="match status" value="1"/>
</dbReference>
<dbReference type="FunFam" id="3.30.420.40:FF:000004">
    <property type="entry name" value="Molecular chaperone DnaK"/>
    <property type="match status" value="1"/>
</dbReference>
<dbReference type="FunFam" id="3.90.640.10:FF:000003">
    <property type="entry name" value="Molecular chaperone DnaK"/>
    <property type="match status" value="1"/>
</dbReference>
<dbReference type="Gene3D" id="1.20.1270.10">
    <property type="match status" value="1"/>
</dbReference>
<dbReference type="Gene3D" id="3.30.420.40">
    <property type="match status" value="2"/>
</dbReference>
<dbReference type="Gene3D" id="3.90.640.10">
    <property type="entry name" value="Actin, Chain A, domain 4"/>
    <property type="match status" value="1"/>
</dbReference>
<dbReference type="Gene3D" id="2.60.34.10">
    <property type="entry name" value="Substrate Binding Domain Of DNAk, Chain A, domain 1"/>
    <property type="match status" value="1"/>
</dbReference>
<dbReference type="HAMAP" id="MF_00332">
    <property type="entry name" value="DnaK"/>
    <property type="match status" value="1"/>
</dbReference>
<dbReference type="InterPro" id="IPR043129">
    <property type="entry name" value="ATPase_NBD"/>
</dbReference>
<dbReference type="InterPro" id="IPR012725">
    <property type="entry name" value="Chaperone_DnaK"/>
</dbReference>
<dbReference type="InterPro" id="IPR018181">
    <property type="entry name" value="Heat_shock_70_CS"/>
</dbReference>
<dbReference type="InterPro" id="IPR029048">
    <property type="entry name" value="HSP70_C_sf"/>
</dbReference>
<dbReference type="InterPro" id="IPR029047">
    <property type="entry name" value="HSP70_peptide-bd_sf"/>
</dbReference>
<dbReference type="InterPro" id="IPR013126">
    <property type="entry name" value="Hsp_70_fam"/>
</dbReference>
<dbReference type="NCBIfam" id="NF001413">
    <property type="entry name" value="PRK00290.1"/>
    <property type="match status" value="1"/>
</dbReference>
<dbReference type="NCBIfam" id="NF003520">
    <property type="entry name" value="PRK05183.1"/>
    <property type="match status" value="1"/>
</dbReference>
<dbReference type="NCBIfam" id="TIGR02350">
    <property type="entry name" value="prok_dnaK"/>
    <property type="match status" value="1"/>
</dbReference>
<dbReference type="PANTHER" id="PTHR19375">
    <property type="entry name" value="HEAT SHOCK PROTEIN 70KDA"/>
    <property type="match status" value="1"/>
</dbReference>
<dbReference type="Pfam" id="PF00012">
    <property type="entry name" value="HSP70"/>
    <property type="match status" value="1"/>
</dbReference>
<dbReference type="PRINTS" id="PR00301">
    <property type="entry name" value="HEATSHOCK70"/>
</dbReference>
<dbReference type="SUPFAM" id="SSF53067">
    <property type="entry name" value="Actin-like ATPase domain"/>
    <property type="match status" value="2"/>
</dbReference>
<dbReference type="SUPFAM" id="SSF100934">
    <property type="entry name" value="Heat shock protein 70kD (HSP70), C-terminal subdomain"/>
    <property type="match status" value="1"/>
</dbReference>
<dbReference type="SUPFAM" id="SSF100920">
    <property type="entry name" value="Heat shock protein 70kD (HSP70), peptide-binding domain"/>
    <property type="match status" value="1"/>
</dbReference>
<dbReference type="PROSITE" id="PS00297">
    <property type="entry name" value="HSP70_1"/>
    <property type="match status" value="1"/>
</dbReference>
<dbReference type="PROSITE" id="PS00329">
    <property type="entry name" value="HSP70_2"/>
    <property type="match status" value="1"/>
</dbReference>
<evidence type="ECO:0000250" key="1"/>
<evidence type="ECO:0000256" key="2">
    <source>
        <dbReference type="SAM" id="MobiDB-lite"/>
    </source>
</evidence>
<evidence type="ECO:0000305" key="3"/>
<proteinExistence type="inferred from homology"/>
<reference key="1">
    <citation type="journal article" date="1998" name="Science">
        <title>Complete genome sequence of Treponema pallidum, the syphilis spirochete.</title>
        <authorList>
            <person name="Fraser C.M."/>
            <person name="Norris S.J."/>
            <person name="Weinstock G.M."/>
            <person name="White O."/>
            <person name="Sutton G.G."/>
            <person name="Dodson R.J."/>
            <person name="Gwinn M.L."/>
            <person name="Hickey E.K."/>
            <person name="Clayton R.A."/>
            <person name="Ketchum K.A."/>
            <person name="Sodergren E."/>
            <person name="Hardham J.M."/>
            <person name="McLeod M.P."/>
            <person name="Salzberg S.L."/>
            <person name="Peterson J.D."/>
            <person name="Khalak H.G."/>
            <person name="Richardson D.L."/>
            <person name="Howell J.K."/>
            <person name="Chidambaram M."/>
            <person name="Utterback T.R."/>
            <person name="McDonald L.A."/>
            <person name="Artiach P."/>
            <person name="Bowman C."/>
            <person name="Cotton M.D."/>
            <person name="Fujii C."/>
            <person name="Garland S.A."/>
            <person name="Hatch B."/>
            <person name="Horst K."/>
            <person name="Roberts K.M."/>
            <person name="Sandusky M."/>
            <person name="Weidman J.F."/>
            <person name="Smith H.O."/>
            <person name="Venter J.C."/>
        </authorList>
    </citation>
    <scope>NUCLEOTIDE SEQUENCE [LARGE SCALE GENOMIC DNA]</scope>
    <source>
        <strain>Nichols</strain>
    </source>
</reference>
<organism>
    <name type="scientific">Treponema pallidum (strain Nichols)</name>
    <dbReference type="NCBI Taxonomy" id="243276"/>
    <lineage>
        <taxon>Bacteria</taxon>
        <taxon>Pseudomonadati</taxon>
        <taxon>Spirochaetota</taxon>
        <taxon>Spirochaetia</taxon>
        <taxon>Spirochaetales</taxon>
        <taxon>Treponemataceae</taxon>
        <taxon>Treponema</taxon>
    </lineage>
</organism>
<keyword id="KW-0067">ATP-binding</keyword>
<keyword id="KW-0143">Chaperone</keyword>
<keyword id="KW-0547">Nucleotide-binding</keyword>
<keyword id="KW-0597">Phosphoprotein</keyword>
<keyword id="KW-1185">Reference proteome</keyword>
<keyword id="KW-0346">Stress response</keyword>
<accession>O83246</accession>
<comment type="function">
    <text evidence="1">Acts as a chaperone.</text>
</comment>
<comment type="induction">
    <text evidence="1">By stress conditions e.g. heat shock (By similarity).</text>
</comment>
<comment type="similarity">
    <text evidence="3">Belongs to the heat shock protein 70 family.</text>
</comment>
<name>DNAK_TREPA</name>
<sequence>MGKIIGIDLGTTNSCVAIMEGGEPVVIQNAEGGRTTPSIIGFTSDGGRVVGQPAKNQMVTNPEHTIYSIKRFIGSRFNELTGEAKKVPYKIVPQGDDVRVEVEGKLYSTQEISAFILQKMKKTAEDYLGEAVTEAVITVPAYFNDAQRQATKDAGKIAGLDVKRIINEPTAASLAFGFNKDSKREKIIAVYDLGGGTFDISILELGDGVFEVKSTNGDTHLGGDDFDARIVQWLEQGFKSDTGIDLGNDRMALQRLREAAEKAKIALSSSASTEINLPFITADANGPKHLQRTLSRSEFEKMTDDLFERTKEPCRKALKDAGISADRIDEILLVGGSTRMPKVAHVIKDVFGKEGSKGVNPDEAVAIGAAIQGGILGGDVKDVLLLDVTPLSLGIETMGGVFTPLISRNTTIPTRKSQVFSTAADGQTAVSIHVLQGERGMANQNRTLGNFDLVGIPPAPRGVPQIEVTFDIDANGIVHVSAKDLGTGKEQHIRIESSSGLSESEIDRMVKEAEANAESDKREREKIEARNVADSLIYQTEKTLKEAGDGVNAADRARIDEAIAELKTVLSGDDVASIKAKTEILQQASYKIAEEMYKRQAAAGAAAGKKSDAPSGNEAEGGDVDYEVVKDEDSK</sequence>